<comment type="function">
    <text evidence="1">Catalyzes oxygen-dependent 5-hydroxyuridine (ho5U) modification at position 34 in tRNAs.</text>
</comment>
<comment type="catalytic activity">
    <reaction evidence="1">
        <text>uridine(34) in tRNA + AH2 + O2 = 5-hydroxyuridine(34) in tRNA + A + H2O</text>
        <dbReference type="Rhea" id="RHEA:64224"/>
        <dbReference type="Rhea" id="RHEA-COMP:11727"/>
        <dbReference type="Rhea" id="RHEA-COMP:13381"/>
        <dbReference type="ChEBI" id="CHEBI:13193"/>
        <dbReference type="ChEBI" id="CHEBI:15377"/>
        <dbReference type="ChEBI" id="CHEBI:15379"/>
        <dbReference type="ChEBI" id="CHEBI:17499"/>
        <dbReference type="ChEBI" id="CHEBI:65315"/>
        <dbReference type="ChEBI" id="CHEBI:136877"/>
    </reaction>
</comment>
<comment type="similarity">
    <text evidence="1">Belongs to the TrhO family.</text>
</comment>
<feature type="chain" id="PRO_0000161505" description="tRNA uridine(34) hydroxylase">
    <location>
        <begin position="1"/>
        <end position="247"/>
    </location>
</feature>
<feature type="domain" description="Rhodanese" evidence="1">
    <location>
        <begin position="124"/>
        <end position="218"/>
    </location>
</feature>
<feature type="active site" description="Cysteine persulfide intermediate" evidence="1">
    <location>
        <position position="178"/>
    </location>
</feature>
<organism>
    <name type="scientific">Rickettsia prowazekii (strain Madrid E)</name>
    <dbReference type="NCBI Taxonomy" id="272947"/>
    <lineage>
        <taxon>Bacteria</taxon>
        <taxon>Pseudomonadati</taxon>
        <taxon>Pseudomonadota</taxon>
        <taxon>Alphaproteobacteria</taxon>
        <taxon>Rickettsiales</taxon>
        <taxon>Rickettsiaceae</taxon>
        <taxon>Rickettsieae</taxon>
        <taxon>Rickettsia</taxon>
        <taxon>typhus group</taxon>
    </lineage>
</organism>
<name>TRHO_RICPR</name>
<evidence type="ECO:0000255" key="1">
    <source>
        <dbReference type="HAMAP-Rule" id="MF_00469"/>
    </source>
</evidence>
<gene>
    <name evidence="1" type="primary">trhO</name>
    <name type="ordered locus">RP125</name>
</gene>
<keyword id="KW-0560">Oxidoreductase</keyword>
<keyword id="KW-1185">Reference proteome</keyword>
<keyword id="KW-0819">tRNA processing</keyword>
<dbReference type="EC" id="1.14.-.-" evidence="1"/>
<dbReference type="EMBL" id="U02603">
    <property type="protein sequence ID" value="AAA18324.1"/>
    <property type="molecule type" value="Unassigned_DNA"/>
</dbReference>
<dbReference type="EMBL" id="AJ235270">
    <property type="protein sequence ID" value="CAA14594.1"/>
    <property type="molecule type" value="Genomic_DNA"/>
</dbReference>
<dbReference type="PIR" id="C71722">
    <property type="entry name" value="C71722"/>
</dbReference>
<dbReference type="RefSeq" id="NP_220517.1">
    <property type="nucleotide sequence ID" value="NC_000963.1"/>
</dbReference>
<dbReference type="RefSeq" id="WP_004597164.1">
    <property type="nucleotide sequence ID" value="NC_000963.1"/>
</dbReference>
<dbReference type="SMR" id="P41087"/>
<dbReference type="STRING" id="272947.gene:17555208"/>
<dbReference type="EnsemblBacteria" id="CAA14594">
    <property type="protein sequence ID" value="CAA14594"/>
    <property type="gene ID" value="CAA14594"/>
</dbReference>
<dbReference type="KEGG" id="rpr:RP125"/>
<dbReference type="PATRIC" id="fig|272947.5.peg.127"/>
<dbReference type="eggNOG" id="COG1054">
    <property type="taxonomic scope" value="Bacteria"/>
</dbReference>
<dbReference type="HOGENOM" id="CLU_038878_0_1_5"/>
<dbReference type="OrthoDB" id="9778326at2"/>
<dbReference type="Proteomes" id="UP000002480">
    <property type="component" value="Chromosome"/>
</dbReference>
<dbReference type="GO" id="GO:0016705">
    <property type="term" value="F:oxidoreductase activity, acting on paired donors, with incorporation or reduction of molecular oxygen"/>
    <property type="evidence" value="ECO:0007669"/>
    <property type="project" value="UniProtKB-UniRule"/>
</dbReference>
<dbReference type="GO" id="GO:0006400">
    <property type="term" value="P:tRNA modification"/>
    <property type="evidence" value="ECO:0007669"/>
    <property type="project" value="UniProtKB-UniRule"/>
</dbReference>
<dbReference type="CDD" id="cd01518">
    <property type="entry name" value="RHOD_YceA"/>
    <property type="match status" value="1"/>
</dbReference>
<dbReference type="Gene3D" id="3.30.70.100">
    <property type="match status" value="1"/>
</dbReference>
<dbReference type="Gene3D" id="3.40.250.10">
    <property type="entry name" value="Rhodanese-like domain"/>
    <property type="match status" value="1"/>
</dbReference>
<dbReference type="HAMAP" id="MF_00469">
    <property type="entry name" value="TrhO"/>
    <property type="match status" value="1"/>
</dbReference>
<dbReference type="InterPro" id="IPR001763">
    <property type="entry name" value="Rhodanese-like_dom"/>
</dbReference>
<dbReference type="InterPro" id="IPR036873">
    <property type="entry name" value="Rhodanese-like_dom_sf"/>
</dbReference>
<dbReference type="InterPro" id="IPR020936">
    <property type="entry name" value="TrhO"/>
</dbReference>
<dbReference type="InterPro" id="IPR040503">
    <property type="entry name" value="TRHO_N"/>
</dbReference>
<dbReference type="NCBIfam" id="NF002397">
    <property type="entry name" value="PRK01415.1"/>
    <property type="match status" value="1"/>
</dbReference>
<dbReference type="PANTHER" id="PTHR43268:SF3">
    <property type="entry name" value="RHODANESE-LIKE DOMAIN-CONTAINING PROTEIN 7-RELATED"/>
    <property type="match status" value="1"/>
</dbReference>
<dbReference type="PANTHER" id="PTHR43268">
    <property type="entry name" value="THIOSULFATE SULFURTRANSFERASE/RHODANESE-LIKE DOMAIN-CONTAINING PROTEIN 2"/>
    <property type="match status" value="1"/>
</dbReference>
<dbReference type="Pfam" id="PF00581">
    <property type="entry name" value="Rhodanese"/>
    <property type="match status" value="1"/>
</dbReference>
<dbReference type="Pfam" id="PF17773">
    <property type="entry name" value="UPF0176_N"/>
    <property type="match status" value="1"/>
</dbReference>
<dbReference type="SMART" id="SM00450">
    <property type="entry name" value="RHOD"/>
    <property type="match status" value="1"/>
</dbReference>
<dbReference type="SUPFAM" id="SSF52821">
    <property type="entry name" value="Rhodanese/Cell cycle control phosphatase"/>
    <property type="match status" value="1"/>
</dbReference>
<dbReference type="PROSITE" id="PS50206">
    <property type="entry name" value="RHODANESE_3"/>
    <property type="match status" value="1"/>
</dbReference>
<reference key="1">
    <citation type="submission" date="1993-10" db="EMBL/GenBank/DDBJ databases">
        <authorList>
            <person name="Wood D.O."/>
        </authorList>
    </citation>
    <scope>NUCLEOTIDE SEQUENCE [GENOMIC DNA]</scope>
    <source>
        <strain>Madrid E</strain>
    </source>
</reference>
<reference key="2">
    <citation type="journal article" date="1998" name="Nature">
        <title>The genome sequence of Rickettsia prowazekii and the origin of mitochondria.</title>
        <authorList>
            <person name="Andersson S.G.E."/>
            <person name="Zomorodipour A."/>
            <person name="Andersson J.O."/>
            <person name="Sicheritz-Ponten T."/>
            <person name="Alsmark U.C.M."/>
            <person name="Podowski R.M."/>
            <person name="Naeslund A.K."/>
            <person name="Eriksson A.-S."/>
            <person name="Winkler H.H."/>
            <person name="Kurland C.G."/>
        </authorList>
    </citation>
    <scope>NUCLEOTIDE SEQUENCE [LARGE SCALE GENOMIC DNA]</scope>
    <source>
        <strain>Madrid E</strain>
    </source>
</reference>
<protein>
    <recommendedName>
        <fullName evidence="1">tRNA uridine(34) hydroxylase</fullName>
        <ecNumber evidence="1">1.14.-.-</ecNumber>
    </recommendedName>
    <alternativeName>
        <fullName evidence="1">tRNA hydroxylation protein O</fullName>
    </alternativeName>
</protein>
<proteinExistence type="inferred from homology"/>
<sequence length="247" mass="28417">MNERITILSAYSFVNIIEPANLIPKLLLVGKKKYIRGTILLANEGFNSSFSGSYENVNIVLKQLIALTGSKDVNVKINYSPVHPFQKLKVRLKREIIAMNVKDLNVDVFKGHYIEPKDWDEFITKQNVILIDTRNEYEIDIGTFKSAINPRTETFKQFPAWVQQNHALLQGKKIAMFCTGGIRCEKSTSLLKSIGYNEVYHLKGGILQYLEDTHNKNNLWQGKCFVFDDRRAVADDLYPAEGYWLHR</sequence>
<accession>P41087</accession>